<evidence type="ECO:0000250" key="1"/>
<evidence type="ECO:0000250" key="2">
    <source>
        <dbReference type="UniProtKB" id="P10499"/>
    </source>
</evidence>
<evidence type="ECO:0000250" key="3">
    <source>
        <dbReference type="UniProtKB" id="P16388"/>
    </source>
</evidence>
<evidence type="ECO:0000250" key="4">
    <source>
        <dbReference type="UniProtKB" id="P63142"/>
    </source>
</evidence>
<evidence type="ECO:0000255" key="5"/>
<evidence type="ECO:0000256" key="6">
    <source>
        <dbReference type="SAM" id="MobiDB-lite"/>
    </source>
</evidence>
<evidence type="ECO:0000269" key="7">
    <source>
    </source>
</evidence>
<evidence type="ECO:0000269" key="8">
    <source>
    </source>
</evidence>
<evidence type="ECO:0000269" key="9">
    <source>
    </source>
</evidence>
<evidence type="ECO:0000269" key="10">
    <source>
    </source>
</evidence>
<evidence type="ECO:0000269" key="11">
    <source>
    </source>
</evidence>
<evidence type="ECO:0000269" key="12">
    <source>
    </source>
</evidence>
<evidence type="ECO:0000269" key="13">
    <source>
    </source>
</evidence>
<evidence type="ECO:0000269" key="14">
    <source>
    </source>
</evidence>
<evidence type="ECO:0000269" key="15">
    <source>
    </source>
</evidence>
<evidence type="ECO:0000269" key="16">
    <source>
    </source>
</evidence>
<evidence type="ECO:0000269" key="17">
    <source>
    </source>
</evidence>
<evidence type="ECO:0000269" key="18">
    <source>
    </source>
</evidence>
<evidence type="ECO:0000269" key="19">
    <source>
    </source>
</evidence>
<evidence type="ECO:0000269" key="20">
    <source>
    </source>
</evidence>
<evidence type="ECO:0000269" key="21">
    <source>
    </source>
</evidence>
<evidence type="ECO:0000269" key="22">
    <source>
    </source>
</evidence>
<evidence type="ECO:0000269" key="23">
    <source>
    </source>
</evidence>
<evidence type="ECO:0000269" key="24">
    <source>
    </source>
</evidence>
<evidence type="ECO:0000269" key="25">
    <source>
    </source>
</evidence>
<evidence type="ECO:0000269" key="26">
    <source>
    </source>
</evidence>
<evidence type="ECO:0000269" key="27">
    <source>
    </source>
</evidence>
<evidence type="ECO:0000269" key="28">
    <source>
    </source>
</evidence>
<evidence type="ECO:0000269" key="29">
    <source>
    </source>
</evidence>
<evidence type="ECO:0000269" key="30">
    <source>
    </source>
</evidence>
<evidence type="ECO:0000303" key="31">
    <source>
    </source>
</evidence>
<evidence type="ECO:0000303" key="32">
    <source>
    </source>
</evidence>
<evidence type="ECO:0000305" key="33"/>
<evidence type="ECO:0000305" key="34">
    <source>
    </source>
</evidence>
<evidence type="ECO:0000305" key="35">
    <source>
    </source>
</evidence>
<evidence type="ECO:0000312" key="36">
    <source>
        <dbReference type="HGNC" id="HGNC:6218"/>
    </source>
</evidence>
<sequence>MTVMSGENVDEASAAPGHPQDGSYPRQADHDDHECCERVVINISGLRFETQLKTLAQFPNTLLGNPKKRMRYFDPLRNEYFFDRNRPSFDAILYYYQSGGRLRRPVNVPLDMFSEEIKFYELGEEAMEKFREDEGFIKEEERPLPEKEYQRQVWLLFEYPESSGPARVIAIVSVMVILISIVIFCLETLPELKDDKDFTGTVHRIDNTTVIYNSNIFTDPFFIVETLCIIWFSFELVVRFFACPSKTDFFKNIMNFIDIVAIIPYFITLGTEIAEQEGNQKGEQATSLAILRVIRLVRVFRIFKLSRHSKGLQILGQTLKASMRELGLLIFFLFIGVILFSSAVYFAEAEEAESHFSSIPDAFWWAVVSMTTVGYGDMYPVTIGGKIVGSLCAIAGVLTIALPVPVIVSNFNYFYHRETEGEEQAQLLHVSSPNLASDSDLSRRSSSTMSKSEYMEIEEDMNNSIAHYRQVNIRTANCTTANQNCVNKSKLLTDV</sequence>
<keyword id="KW-0965">Cell junction</keyword>
<keyword id="KW-1003">Cell membrane</keyword>
<keyword id="KW-0966">Cell projection</keyword>
<keyword id="KW-0968">Cytoplasmic vesicle</keyword>
<keyword id="KW-0225">Disease variant</keyword>
<keyword id="KW-0256">Endoplasmic reticulum</keyword>
<keyword id="KW-0325">Glycoprotein</keyword>
<keyword id="KW-0407">Ion channel</keyword>
<keyword id="KW-0406">Ion transport</keyword>
<keyword id="KW-0449">Lipoprotein</keyword>
<keyword id="KW-0472">Membrane</keyword>
<keyword id="KW-0564">Palmitate</keyword>
<keyword id="KW-0597">Phosphoprotein</keyword>
<keyword id="KW-0630">Potassium</keyword>
<keyword id="KW-0631">Potassium channel</keyword>
<keyword id="KW-0633">Potassium transport</keyword>
<keyword id="KW-1267">Proteomics identification</keyword>
<keyword id="KW-1185">Reference proteome</keyword>
<keyword id="KW-0691">RNA editing</keyword>
<keyword id="KW-0770">Synapse</keyword>
<keyword id="KW-0812">Transmembrane</keyword>
<keyword id="KW-1133">Transmembrane helix</keyword>
<keyword id="KW-0813">Transport</keyword>
<keyword id="KW-0851">Voltage-gated channel</keyword>
<gene>
    <name evidence="36" type="primary">KCNA1</name>
</gene>
<protein>
    <recommendedName>
        <fullName evidence="33">Potassium voltage-gated channel subfamily A member 1</fullName>
    </recommendedName>
    <alternativeName>
        <fullName evidence="31">Voltage-gated K(+) channel HuKI</fullName>
    </alternativeName>
    <alternativeName>
        <fullName evidence="32">Voltage-gated potassium channel HBK1</fullName>
    </alternativeName>
    <alternativeName>
        <fullName>Voltage-gated potassium channel subunit Kv1.1</fullName>
    </alternativeName>
</protein>
<comment type="function">
    <text evidence="2 9 11 14 15 16 17 18 19 20 21 24 28">Voltage-gated potassium channel that mediates transmembrane potassium transport in excitable membranes, primarily in the brain and the central nervous system, but also in the kidney (PubMed:19903818, PubMed:8845167). Contributes to the regulation of the membrane potential and nerve signaling, and prevents neuronal hyperexcitability (PubMed:17156368). Forms tetrameric potassium-selective channels through which potassium ions pass in accordance with their electrochemical gradient. The channel alternates between opened and closed conformations in response to the voltage difference across the membrane (PubMed:19912772). Can form functional homotetrameric channels and heterotetrameric channels that contain variable proportions of KCNA1, KCNA2, KCNA4, KCNA5, KCNA6, KCNA7, and possibly other family members as well; channel properties depend on the type of alpha subunits that are part of the channel (PubMed:12077175, PubMed:17156368). Channel properties are modulated by cytoplasmic beta subunits that regulate the subcellular location of the alpha subunits and promote rapid inactivation of delayed rectifier potassium channels (PubMed:12077175, PubMed:17156368). In vivo, membranes probably contain a mixture of heteromeric potassium channel complexes, making it difficult to assign currents observed in intact tissues to any particular potassium channel family member. Homotetrameric KCNA1 forms a delayed-rectifier potassium channel that opens in response to membrane depolarization, followed by slow spontaneous channel closure (PubMed:19307729, PubMed:19903818, PubMed:19912772, PubMed:19968958). In contrast, a heterotetrameric channel formed by KCNA1 and KCNA4 shows rapid inactivation (PubMed:17156368). Regulates neuronal excitability in hippocampus, especially in mossy fibers and medial perforant path axons, preventing neuronal hyperexcitability. Response to toxins that are selective for KCNA1, respectively for KCNA2, suggests that heteromeric potassium channels composed of both KCNA1 and KCNA2 play a role in pacemaking and regulate the output of deep cerebellar nuclear neurons (By similarity). May function as down-stream effector for G protein-coupled receptors and inhibit GABAergic inputs to basolateral amygdala neurons (By similarity). May contribute to the regulation of neurotransmitter release, such as gamma-aminobutyric acid (GABA) release (By similarity). Plays a role in regulating the generation of action potentials and preventing hyperexcitability in myelinated axons of the vagus nerve, and thereby contributes to the regulation of heart contraction (By similarity). Required for normal neuromuscular responses (PubMed:11026449, PubMed:17136396). Regulates the frequency of neuronal action potential firing in response to mechanical stimuli, and plays a role in the perception of pain caused by mechanical stimuli, but does not play a role in the perception of pain due to heat stimuli (By similarity). Required for normal responses to auditory stimuli and precise location of sound sources, but not for sound perception (By similarity). The use of toxins that block specific channels suggest that it contributes to the regulation of the axonal release of the neurotransmitter dopamine (By similarity). Required for normal postnatal brain development and normal proliferation of neuronal precursor cells in the brain (By similarity). Plays a role in the reabsorption of Mg(2+) in the distal convoluted tubules in the kidney and in magnesium ion homeostasis, probably via its effect on the membrane potential (PubMed:19307729, PubMed:23903368).</text>
</comment>
<comment type="catalytic activity">
    <reaction evidence="17 18 19 28">
        <text>K(+)(in) = K(+)(out)</text>
        <dbReference type="Rhea" id="RHEA:29463"/>
        <dbReference type="ChEBI" id="CHEBI:29103"/>
    </reaction>
</comment>
<comment type="activity regulation">
    <text evidence="17 19">Inhibited by 1.1 mM 4-aminopyridine (4-AP) and by 20 mM tetraethylammonium (TEA), but not by charybdotoxin (CTX) (PubMed:19912772). Inhibited by dendrotoxin (DTX) (PubMed:19307729).</text>
</comment>
<comment type="subunit">
    <text evidence="2 3 10 16 20 24 33">Homotetramer and heterotetramer with other channel-forming alpha subunits, such as KCNA2, KCNA4, KCNA5, KCNA6 and KCNA7 (PubMed:12077175, PubMed:17156368). Channel activity is regulated by interaction with the beta subunits KCNAB1 and KCNAB2 (PubMed:12077175, PubMed:17156368). Identified in a complex with KCNA2 and KCNAB2 (PubMed:11086297). Interacts (via C-terminus) with the PDZ domains of DLG1, DLG2 and DLG4 (By similarity). Interacts with LGI1 within a complex containing LGI1, KCNA4 and KCNAB1 (By similarity). Interacts (via N-terminus) with STX1A; this promotes channel inactivation (By similarity). Interacts (via N-terminus) with the heterodimer formed by GNB1 and GNG2; this promotes channel inactivation (By similarity). Can interact simultaneously with STX1A and the heterodimer formed by GNB1 and GNG2 (By similarity). Interacts (via cytoplasmic N-terminal domain) with KCNRG; this inhibits channel activity (PubMed:19968958). Interacts with ANK3; this inhibits channel activity (PubMed:23903368). Interacts with ADAM11 (By similarity).</text>
</comment>
<comment type="interaction">
    <interactant intactId="EBI-8286599">
        <id>Q09470</id>
    </interactant>
    <interactant intactId="EBI-4290634">
        <id>Q9BQE5</id>
        <label>APOL2</label>
    </interactant>
    <organismsDiffer>false</organismsDiffer>
    <experiments>3</experiments>
</comment>
<comment type="interaction">
    <interactant intactId="EBI-8286599">
        <id>Q09470</id>
    </interactant>
    <interactant intactId="EBI-80389">
        <id>P78352</id>
        <label>DLG4</label>
    </interactant>
    <organismsDiffer>false</organismsDiffer>
    <experiments>2</experiments>
</comment>
<comment type="interaction">
    <interactant intactId="EBI-8286599">
        <id>Q09470</id>
    </interactant>
    <interactant intactId="EBI-8645574">
        <id>Q9UPQ8</id>
        <label>DOLK</label>
    </interactant>
    <organismsDiffer>false</organismsDiffer>
    <experiments>7</experiments>
</comment>
<comment type="interaction">
    <interactant intactId="EBI-8286599">
        <id>Q09470</id>
    </interactant>
    <interactant intactId="EBI-13345167">
        <id>Q8TDT2</id>
        <label>GPR152</label>
    </interactant>
    <organismsDiffer>false</organismsDiffer>
    <experiments>3</experiments>
</comment>
<comment type="interaction">
    <interactant intactId="EBI-8286599">
        <id>Q09470</id>
    </interactant>
    <interactant intactId="EBI-18076404">
        <id>O15529</id>
        <label>GPR42</label>
    </interactant>
    <organismsDiffer>false</organismsDiffer>
    <experiments>3</experiments>
</comment>
<comment type="interaction">
    <interactant intactId="EBI-8286599">
        <id>Q09470</id>
    </interactant>
    <interactant intactId="EBI-725665">
        <id>Q9Y5U9</id>
        <label>IER3IP1</label>
    </interactant>
    <organismsDiffer>false</organismsDiffer>
    <experiments>3</experiments>
</comment>
<comment type="interaction">
    <interactant intactId="EBI-8286599">
        <id>Q09470</id>
    </interactant>
    <interactant intactId="EBI-10266796">
        <id>Q8N5M9</id>
        <label>JAGN1</label>
    </interactant>
    <organismsDiffer>false</organismsDiffer>
    <experiments>5</experiments>
</comment>
<comment type="interaction">
    <interactant intactId="EBI-8286599">
        <id>Q09470</id>
    </interactant>
    <interactant intactId="EBI-12265328">
        <id>Q16322</id>
        <label>KCNA10</label>
    </interactant>
    <organismsDiffer>false</organismsDiffer>
    <experiments>3</experiments>
</comment>
<comment type="interaction">
    <interactant intactId="EBI-8286599">
        <id>Q09470</id>
    </interactant>
    <interactant intactId="EBI-8627664">
        <id>P22001</id>
        <label>KCNA3</label>
    </interactant>
    <organismsDiffer>false</organismsDiffer>
    <experiments>3</experiments>
</comment>
<comment type="interaction">
    <interactant intactId="EBI-8286599">
        <id>Q09470</id>
    </interactant>
    <interactant intactId="EBI-3932027">
        <id>P21145</id>
        <label>MAL</label>
    </interactant>
    <organismsDiffer>false</organismsDiffer>
    <experiments>3</experiments>
</comment>
<comment type="interaction">
    <interactant intactId="EBI-8286599">
        <id>Q09470</id>
    </interactant>
    <interactant intactId="EBI-347996">
        <id>O43765</id>
        <label>SGTA</label>
    </interactant>
    <organismsDiffer>false</organismsDiffer>
    <experiments>3</experiments>
</comment>
<comment type="interaction">
    <interactant intactId="EBI-8286599">
        <id>Q09470</id>
    </interactant>
    <interactant intactId="EBI-8638294">
        <id>Q9NUH8</id>
        <label>TMEM14B</label>
    </interactant>
    <organismsDiffer>false</organismsDiffer>
    <experiments>3</experiments>
</comment>
<comment type="interaction">
    <interactant intactId="EBI-8286599">
        <id>Q09470</id>
    </interactant>
    <interactant intactId="EBI-12015604">
        <id>Q8N2M4</id>
        <label>TMEM86A</label>
    </interactant>
    <organismsDiffer>false</organismsDiffer>
    <experiments>3</experiments>
</comment>
<comment type="interaction">
    <interactant intactId="EBI-8286599">
        <id>Q09470</id>
    </interactant>
    <interactant intactId="EBI-349596">
        <id>Q62936</id>
        <label>Dlg3</label>
    </interactant>
    <organismsDiffer>true</organismsDiffer>
    <experiments>2</experiments>
</comment>
<comment type="subcellular location">
    <subcellularLocation>
        <location evidence="11 14 15 16 17 18 19 20 24">Cell membrane</location>
        <topology evidence="33">Multi-pass membrane protein</topology>
    </subcellularLocation>
    <subcellularLocation>
        <location evidence="10">Membrane</location>
    </subcellularLocation>
    <subcellularLocation>
        <location evidence="10">Cell projection</location>
        <location evidence="10">Axon</location>
    </subcellularLocation>
    <subcellularLocation>
        <location evidence="23">Cytoplasmic vesicle</location>
    </subcellularLocation>
    <subcellularLocation>
        <location evidence="2">Perikaryon</location>
    </subcellularLocation>
    <subcellularLocation>
        <location evidence="2">Endoplasmic reticulum</location>
    </subcellularLocation>
    <subcellularLocation>
        <location evidence="3">Cell projection</location>
        <location evidence="3">Dendrite</location>
    </subcellularLocation>
    <subcellularLocation>
        <location evidence="3">Cell junction</location>
    </subcellularLocation>
    <subcellularLocation>
        <location evidence="3">Synapse</location>
    </subcellularLocation>
    <subcellularLocation>
        <location evidence="2">Presynaptic cell membrane</location>
    </subcellularLocation>
    <subcellularLocation>
        <location evidence="3">Presynapse</location>
    </subcellularLocation>
    <text evidence="2 3">Homotetrameric KCNA1 is primarily located in the endoplasmic reticulum. Interaction with KCNA2 and KCNAB2 or with KCNA4 and KCNAB2 promotes expression at the cell membrane (By similarity).</text>
</comment>
<comment type="tissue specificity">
    <text evidence="10 22">Detected adjacent to nodes of Ranvier in juxtaparanodal zones in spinal cord nerve fibers, but also in paranodal regions in some myelinated spinal cord axons (at protein level) (PubMed:11086297). Detected in the islet of Langerhans (PubMed:21483673).</text>
</comment>
<comment type="domain">
    <text evidence="2">The cytoplasmic N-terminus is important for tetramerization and for interaction with the beta subunits that promote rapid channel closure.</text>
</comment>
<comment type="domain">
    <text evidence="4">The transmembrane segment S4 functions as a voltage-sensor and is characterized by a series of positively charged amino acids at every third position. Channel opening and closing is effected by a conformation change that affects the position and orientation of the voltage-sensor paddle formed by S3 and S4 within the membrane. A transmembrane electric field that is positive inside would push the positively charged S4 segment outwards, thereby opening the pore, while a field that is negative inside would pull the S4 segment inwards and close the pore. Changes in the position and orientation of S4 are then transmitted to the activation gate formed by the inner helix bundle via the S4-S5 linker region.</text>
</comment>
<comment type="PTM">
    <text evidence="2">N-glycosylated.</text>
</comment>
<comment type="PTM">
    <text evidence="14">Palmitoylated on Cys-243; which may be required for membrane targeting.</text>
</comment>
<comment type="PTM">
    <text evidence="3 23">Phosphorylated on tyrosine residues. Phosphorylation increases in response to NRG1; this inhibits channel activity (By similarity). Phosphorylation at Ser-446 regulates channel activity by down-regulating expression at the cell membrane (PubMed:23774215).</text>
</comment>
<comment type="RNA editing">
    <location>
        <position position="400" evidence="12"/>
    </location>
    <text>Partially edited. RNA editing varies from 17% in the caudate nucleus to 68% in the spinal cord and to 77% in the medulla.</text>
</comment>
<comment type="disease" evidence="7 8 9 11 13 16 26 27 28 29 30">
    <disease id="DI-00475">
        <name>Episodic ataxia 1</name>
        <acronym>EA1</acronym>
        <description>An autosomal dominant disorder characterized by brief episodes of ataxia and dysarthria. Neurological examination during and between the attacks demonstrates spontaneous, repetitive discharges in the distal musculature (myokymia) that arise from peripheral nerve. Nystagmus is absent.</description>
        <dbReference type="MIM" id="160120"/>
    </disease>
    <text>The disease is caused by variants affecting the gene represented in this entry.</text>
</comment>
<comment type="disease" evidence="9 15 17 18">
    <disease id="DI-00793">
        <name>Myokymia isolated 1</name>
        <acronym>MK1</acronym>
        <description>A condition characterized by spontaneous involuntary contraction of muscle fiber groups that can be observed as vermiform movement of the overlying skin. Electromyography typically shows continuous motor unit activity with spontaneous oligo- and multiplet-discharges of high intraburst frequency (myokymic discharges). Isolated spontaneous muscle twitches occur in many persons and have no grave significance.</description>
        <dbReference type="MIM" id="160120"/>
    </disease>
    <text>The disease is caused by variants affecting the gene represented in this entry.</text>
</comment>
<comment type="miscellaneous">
    <text evidence="34">The delay or D-type current observed in hippocampus pyramidal neurons is probably mediated by potassium channels containing KCNA2 plus KCNA1 or other family members. It is activated at about -50 mV, i.e. below the action potential threshold, and is characterized by slow inactivation, extremely slow recovery from inactivation, sensitivity to dendrotoxin (DTX) and to 4-aminopyridine (4-AP).</text>
</comment>
<comment type="similarity">
    <text evidence="33">Belongs to the potassium channel family. A (Shaker) (TC 1.A.1.2) subfamily. Kv1.1/KCNA1 sub-subfamily.</text>
</comment>
<feature type="chain" id="PRO_0000053968" description="Potassium voltage-gated channel subfamily A member 1">
    <location>
        <begin position="1"/>
        <end position="495"/>
    </location>
</feature>
<feature type="topological domain" description="Cytoplasmic" evidence="4">
    <location>
        <begin position="1"/>
        <end position="164"/>
    </location>
</feature>
<feature type="transmembrane region" description="Helical; Name=Segment S1" evidence="4">
    <location>
        <begin position="165"/>
        <end position="186"/>
    </location>
</feature>
<feature type="topological domain" description="Extracellular" evidence="4">
    <location>
        <begin position="187"/>
        <end position="220"/>
    </location>
</feature>
<feature type="transmembrane region" description="Helical; Name=Segment S2" evidence="4">
    <location>
        <begin position="221"/>
        <end position="242"/>
    </location>
</feature>
<feature type="topological domain" description="Cytoplasmic" evidence="4">
    <location>
        <begin position="243"/>
        <end position="253"/>
    </location>
</feature>
<feature type="transmembrane region" description="Helical; Name=Segment S3" evidence="4">
    <location>
        <begin position="254"/>
        <end position="274"/>
    </location>
</feature>
<feature type="topological domain" description="Extracellular" evidence="4">
    <location>
        <begin position="275"/>
        <end position="287"/>
    </location>
</feature>
<feature type="transmembrane region" description="Helical; Voltage-sensor; Name=Segment S4" evidence="4">
    <location>
        <begin position="288"/>
        <end position="308"/>
    </location>
</feature>
<feature type="topological domain" description="Cytoplasmic" evidence="4">
    <location>
        <begin position="309"/>
        <end position="323"/>
    </location>
</feature>
<feature type="transmembrane region" description="Helical; Name=Segment S5" evidence="4">
    <location>
        <begin position="324"/>
        <end position="345"/>
    </location>
</feature>
<feature type="topological domain" description="Extracellular" evidence="4">
    <location>
        <begin position="346"/>
        <end position="359"/>
    </location>
</feature>
<feature type="intramembrane region" description="Helical; Name=Pore helix" evidence="4">
    <location>
        <begin position="360"/>
        <end position="371"/>
    </location>
</feature>
<feature type="intramembrane region" evidence="4">
    <location>
        <begin position="372"/>
        <end position="379"/>
    </location>
</feature>
<feature type="topological domain" description="Extracellular" evidence="4">
    <location>
        <begin position="380"/>
        <end position="386"/>
    </location>
</feature>
<feature type="transmembrane region" description="Helical; Name=Segment S6" evidence="4">
    <location>
        <begin position="387"/>
        <end position="415"/>
    </location>
</feature>
<feature type="topological domain" description="Cytoplasmic" evidence="4">
    <location>
        <begin position="416"/>
        <end position="495"/>
    </location>
</feature>
<feature type="region of interest" description="Tetramerization domain" evidence="2">
    <location>
        <begin position="1"/>
        <end position="128"/>
    </location>
</feature>
<feature type="region of interest" description="Disordered" evidence="6">
    <location>
        <begin position="1"/>
        <end position="30"/>
    </location>
</feature>
<feature type="region of interest" description="S4-S5 linker" evidence="4">
    <location>
        <begin position="310"/>
        <end position="323"/>
    </location>
</feature>
<feature type="short sequence motif" description="Selectivity filter" evidence="4">
    <location>
        <begin position="372"/>
        <end position="377"/>
    </location>
</feature>
<feature type="short sequence motif" description="PDZ-binding" evidence="1">
    <location>
        <begin position="493"/>
        <end position="495"/>
    </location>
</feature>
<feature type="modified residue" description="Phosphoserine" evidence="2">
    <location>
        <position position="23"/>
    </location>
</feature>
<feature type="modified residue" description="Phosphoserine; by PKA" evidence="5">
    <location>
        <position position="322"/>
    </location>
</feature>
<feature type="modified residue" description="Phosphoserine" evidence="2">
    <location>
        <position position="437"/>
    </location>
</feature>
<feature type="modified residue" description="Phosphoserine" evidence="2">
    <location>
        <position position="439"/>
    </location>
</feature>
<feature type="modified residue" description="Phosphoserine; by PKA" evidence="35">
    <location>
        <position position="446"/>
    </location>
</feature>
<feature type="lipid moiety-binding region" description="S-palmitoyl cysteine" evidence="14">
    <location>
        <position position="243"/>
    </location>
</feature>
<feature type="glycosylation site" description="N-linked (GlcNAc...) asparagine" evidence="5">
    <location>
        <position position="207"/>
    </location>
</feature>
<feature type="sequence variant" id="VAR_001508" description="In EA1; dbSNP:rs104894349." evidence="26 27">
    <original>V</original>
    <variation>F</variation>
    <location>
        <position position="174"/>
    </location>
</feature>
<feature type="sequence variant" id="VAR_001509" description="In EA1." evidence="30">
    <original>I</original>
    <variation>R</variation>
    <location>
        <position position="177"/>
    </location>
</feature>
<feature type="sequence variant" id="VAR_020830" description="In EA1; alters voltage dependence and kinetics of activation though not of C-type inactivation; dbSNP:rs104894357." evidence="27 28">
    <original>F</original>
    <variation>C</variation>
    <location>
        <position position="184"/>
    </location>
</feature>
<feature type="sequence variant" id="VAR_020051" description="In dbSNP:rs2229000.">
    <original>R</original>
    <variation>H</variation>
    <location>
        <position position="204"/>
    </location>
</feature>
<feature type="sequence variant" id="VAR_001510" description="In EA1; dbSNP:rs104894354." evidence="30">
    <original>T</original>
    <variation>A</variation>
    <location>
        <position position="226"/>
    </location>
</feature>
<feature type="sequence variant" id="VAR_037100" description="In MK1; induces a reduced efflux of potassium ions during depolarization which results in increased muscle cell activity; coexpression studies of the mutant protein with the wild-type protein produces significantly reduced currents suggesting a severe effect of the mutation; dbSNP:rs28933383." evidence="15">
    <original>T</original>
    <variation>K</variation>
    <location>
        <position position="226"/>
    </location>
</feature>
<feature type="sequence variant" id="VAR_020831" description="In EA1; dbSNP:rs28933383." evidence="29">
    <original>T</original>
    <variation>M</variation>
    <location>
        <position position="226"/>
    </location>
</feature>
<feature type="sequence variant" id="VAR_037101" description="In EA1; yields currents with a largely reduced amplitude; dbSNP:rs28933383." evidence="7">
    <original>T</original>
    <variation>R</variation>
    <location>
        <position position="226"/>
    </location>
</feature>
<feature type="sequence variant" id="VAR_001511" description="In EA1; dbSNP:rs104894348." evidence="26">
    <original>R</original>
    <variation>S</variation>
    <location>
        <position position="239"/>
    </location>
</feature>
<feature type="sequence variant" id="VAR_037102" description="In MK1; 10% reduction of mean peak current amplitudes compared to wil-dtype; mutant and wild-type expression together is consistent with a loss-of-function effect of the mutation; dbSNP:rs28933381." evidence="9">
    <original>A</original>
    <variation>P</variation>
    <location>
        <position position="242"/>
    </location>
</feature>
<feature type="sequence variant" id="VAR_037103" description="In MK1; does not affect channel activity; dbSNP:rs28933382." evidence="9">
    <original>P</original>
    <variation>H</variation>
    <location>
        <position position="244"/>
    </location>
</feature>
<feature type="sequence variant" id="VAR_001512" description="In EA1; dbSNP:rs104894356." evidence="26">
    <original>F</original>
    <variation>I</variation>
    <location>
        <position position="249"/>
    </location>
</feature>
<feature type="sequence variant" id="VAR_072397" description="In MK1; strongly reduces the activity of homomeric channels with dominant negative effects on wild-type channels; dbSNP:rs121918067." evidence="17">
    <original>N</original>
    <variation>D</variation>
    <location>
        <position position="255"/>
    </location>
</feature>
<feature type="sequence variant" id="VAR_020832" description="In EA1; results in non-functional homomeric channels; accelerates recovery from N-type inactivation due to interaction with KCNAB1; slows down N-type inactivation of heteromeric channels formed by KCNA1 and KCNA4; dbSNP:rs104894353." evidence="11 16 27 28">
    <original>E</original>
    <variation>D</variation>
    <location>
        <position position="325"/>
    </location>
</feature>
<feature type="sequence variant" id="VAR_020833" description="In EA1." evidence="8">
    <original>L</original>
    <variation>I</variation>
    <location>
        <position position="329"/>
    </location>
</feature>
<feature type="sequence variant" id="VAR_020834" description="In EA1; phenotype without myokymia." evidence="13">
    <original>S</original>
    <variation>I</variation>
    <location>
        <position position="342"/>
    </location>
</feature>
<feature type="sequence variant" id="VAR_016805" description="In RNA edited version.">
    <original>I</original>
    <variation>V</variation>
    <location>
        <position position="400"/>
    </location>
</feature>
<feature type="sequence variant" id="VAR_001513" description="In EA1; results in slower channel activation compared to wild-type; slows down N-type inactivation of heteromeric channels formed by KCNA1 and KCNA4; dbSNP:rs104894355." evidence="9 16 30">
    <original>V</original>
    <variation>I</variation>
    <location>
        <position position="404"/>
    </location>
</feature>
<feature type="sequence variant" id="VAR_078205" description="Found in a patient with neonatal onset epileptic encephalopathy; likely pathogenic; dbSNP:rs1555085798." evidence="25">
    <original>P</original>
    <variation>L</variation>
    <location>
        <position position="405"/>
    </location>
</feature>
<feature type="sequence variant" id="VAR_001514" description="In EA1; channels have voltage dependence similar to that of wild-type channels but with faster kinetics and increased C-type inactivation; accelerates recovery from N-type inactivation due to interaction with KCNAB1; slows down N-type inactivation of heteromeric channels formed by KCNA1 and KCNA4; dbSNP:rs104894352." evidence="11 16 26 28">
    <original>V</original>
    <variation>A</variation>
    <location>
        <position position="408"/>
    </location>
</feature>
<feature type="mutagenesis site" description="No effect on palmitoylation, no effect on current kinetics." evidence="14">
    <original>CC</original>
    <variation>AA</variation>
    <location>
        <begin position="35"/>
        <end position="36"/>
    </location>
</feature>
<feature type="mutagenesis site" description="Slows down N-type inactivation of heteromeric channels formed by KCNA1 and KCNA4." evidence="16">
    <original>I</original>
    <variation>N</variation>
    <location>
        <position position="177"/>
    </location>
</feature>
<feature type="mutagenesis site" description="Strongly decreases palmitoylation and alters current kinetics." evidence="14">
    <original>C</original>
    <variation>A</variation>
    <location>
        <position position="243"/>
    </location>
</feature>
<feature type="mutagenesis site" description="Slightly increases channel activity, but does not affect expression at the cell membrane." evidence="17">
    <original>N</original>
    <variation>A</variation>
    <variation>H</variation>
    <variation>T</variation>
    <location>
        <position position="255"/>
    </location>
</feature>
<feature type="mutagenesis site" description="Abolishes channel activity, but does not affect expression at the cell membrane." evidence="17">
    <original>N</original>
    <variation>E</variation>
    <location>
        <position position="255"/>
    </location>
</feature>
<feature type="mutagenesis site" description="Strongly reduces channel activity, but does not affect expression at the cell membrane." evidence="17">
    <original>N</original>
    <variation>Q</variation>
    <location>
        <position position="255"/>
    </location>
</feature>
<feature type="mutagenesis site" description="No effect on channel activity." evidence="17">
    <original>N</original>
    <variation>V</variation>
    <location>
        <position position="255"/>
    </location>
</feature>
<feature type="mutagenesis site" description="Impairs phosphorylation by PKA." evidence="23">
    <original>S</original>
    <variation>A</variation>
    <location>
        <position position="446"/>
    </location>
</feature>
<feature type="mutagenesis site" description="Impairs expression at the cell membrane." evidence="23">
    <original>S</original>
    <variation>E</variation>
    <location>
        <position position="446"/>
    </location>
</feature>
<feature type="sequence conflict" description="In Ref. 5; no nucleotide entry." evidence="33" ref="5">
    <location>
        <position position="265"/>
    </location>
</feature>
<feature type="sequence conflict" description="In Ref. 5; no nucleotide entry." evidence="33" ref="5">
    <original>L</original>
    <variation>R</variation>
    <location>
        <position position="315"/>
    </location>
</feature>
<feature type="sequence conflict" description="In Ref. 1; AAA36139." evidence="33" ref="1">
    <original>S</original>
    <variation>Y</variation>
    <location>
        <position position="452"/>
    </location>
</feature>
<dbReference type="EMBL" id="L02750">
    <property type="protein sequence ID" value="AAA36139.1"/>
    <property type="molecule type" value="mRNA"/>
</dbReference>
<dbReference type="EMBL" id="AC006063">
    <property type="status" value="NOT_ANNOTATED_CDS"/>
    <property type="molecule type" value="Genomic_DNA"/>
</dbReference>
<dbReference type="EMBL" id="CH471116">
    <property type="protein sequence ID" value="EAW88833.1"/>
    <property type="molecule type" value="Genomic_DNA"/>
</dbReference>
<dbReference type="EMBL" id="BC101733">
    <property type="protein sequence ID" value="AAI01734.1"/>
    <property type="molecule type" value="mRNA"/>
</dbReference>
<dbReference type="EMBL" id="BC112180">
    <property type="protein sequence ID" value="AAI12181.1"/>
    <property type="molecule type" value="mRNA"/>
</dbReference>
<dbReference type="CCDS" id="CCDS8535.1"/>
<dbReference type="PIR" id="I57680">
    <property type="entry name" value="I57680"/>
</dbReference>
<dbReference type="RefSeq" id="NP_000208.2">
    <property type="nucleotide sequence ID" value="NM_000217.3"/>
</dbReference>
<dbReference type="SMR" id="Q09470"/>
<dbReference type="BioGRID" id="109939">
    <property type="interactions" value="21"/>
</dbReference>
<dbReference type="CORUM" id="Q09470"/>
<dbReference type="FunCoup" id="Q09470">
    <property type="interactions" value="305"/>
</dbReference>
<dbReference type="IntAct" id="Q09470">
    <property type="interactions" value="15"/>
</dbReference>
<dbReference type="MINT" id="Q09470"/>
<dbReference type="STRING" id="9606.ENSP00000371985"/>
<dbReference type="BindingDB" id="Q09470"/>
<dbReference type="ChEMBL" id="CHEMBL2309"/>
<dbReference type="DrugBank" id="DB11640">
    <property type="generic name" value="Amifampridine"/>
</dbReference>
<dbReference type="DrugBank" id="DB00321">
    <property type="generic name" value="Amitriptyline"/>
</dbReference>
<dbReference type="DrugBank" id="DB06637">
    <property type="generic name" value="Dalfampridine"/>
</dbReference>
<dbReference type="DrugBank" id="DB01189">
    <property type="generic name" value="Desflurane"/>
</dbReference>
<dbReference type="DrugBank" id="DB00228">
    <property type="generic name" value="Enflurane"/>
</dbReference>
<dbReference type="DrugBank" id="DB00753">
    <property type="generic name" value="Isoflurane"/>
</dbReference>
<dbReference type="DrugBank" id="DB01028">
    <property type="generic name" value="Methoxyflurane"/>
</dbReference>
<dbReference type="DrugBank" id="DB01110">
    <property type="generic name" value="Miconazole"/>
</dbReference>
<dbReference type="DrugBank" id="DB01069">
    <property type="generic name" value="Promethazine"/>
</dbReference>
<dbReference type="DrugBank" id="DB08837">
    <property type="generic name" value="Tetraethylammonium"/>
</dbReference>
<dbReference type="DrugCentral" id="Q09470"/>
<dbReference type="GuidetoPHARMACOLOGY" id="538"/>
<dbReference type="TCDB" id="1.A.1.2.12">
    <property type="family name" value="the voltage-gated ion channel (vic) superfamily"/>
</dbReference>
<dbReference type="TCDB" id="8.B.31.1.1">
    <property type="family name" value="the shaker-like peptide inhibitor, kappa-actitoxin-ate1a (ate1a) family"/>
</dbReference>
<dbReference type="GlyCosmos" id="Q09470">
    <property type="glycosylation" value="1 site, No reported glycans"/>
</dbReference>
<dbReference type="GlyGen" id="Q09470">
    <property type="glycosylation" value="1 site"/>
</dbReference>
<dbReference type="iPTMnet" id="Q09470"/>
<dbReference type="PhosphoSitePlus" id="Q09470"/>
<dbReference type="SwissPalm" id="Q09470"/>
<dbReference type="BioMuta" id="KCNA1"/>
<dbReference type="DMDM" id="223590092"/>
<dbReference type="MassIVE" id="Q09470"/>
<dbReference type="PaxDb" id="9606-ENSP00000371985"/>
<dbReference type="PeptideAtlas" id="Q09470"/>
<dbReference type="ProteomicsDB" id="58722"/>
<dbReference type="ABCD" id="Q09470">
    <property type="antibodies" value="2 sequenced antibodies"/>
</dbReference>
<dbReference type="Antibodypedia" id="22315">
    <property type="antibodies" value="448 antibodies from 35 providers"/>
</dbReference>
<dbReference type="DNASU" id="3736"/>
<dbReference type="Ensembl" id="ENST00000382545.5">
    <property type="protein sequence ID" value="ENSP00000371985.3"/>
    <property type="gene ID" value="ENSG00000111262.6"/>
</dbReference>
<dbReference type="GeneID" id="3736"/>
<dbReference type="KEGG" id="hsa:3736"/>
<dbReference type="MANE-Select" id="ENST00000382545.5">
    <property type="protein sequence ID" value="ENSP00000371985.3"/>
    <property type="RefSeq nucleotide sequence ID" value="NM_000217.3"/>
    <property type="RefSeq protein sequence ID" value="NP_000208.2"/>
</dbReference>
<dbReference type="UCSC" id="uc001qnh.4">
    <property type="organism name" value="human"/>
</dbReference>
<dbReference type="AGR" id="HGNC:6218"/>
<dbReference type="CTD" id="3736"/>
<dbReference type="DisGeNET" id="3736"/>
<dbReference type="GeneCards" id="KCNA1"/>
<dbReference type="GeneReviews" id="KCNA1"/>
<dbReference type="HGNC" id="HGNC:6218">
    <property type="gene designation" value="KCNA1"/>
</dbReference>
<dbReference type="HPA" id="ENSG00000111262">
    <property type="expression patterns" value="Tissue enriched (brain)"/>
</dbReference>
<dbReference type="MalaCards" id="KCNA1"/>
<dbReference type="MIM" id="160120">
    <property type="type" value="phenotype"/>
</dbReference>
<dbReference type="MIM" id="176260">
    <property type="type" value="gene"/>
</dbReference>
<dbReference type="neXtProt" id="NX_Q09470"/>
<dbReference type="OpenTargets" id="ENSG00000111262"/>
<dbReference type="Orphanet" id="1934">
    <property type="disease" value="Early infantile developmental and epileptic encephalopathy"/>
</dbReference>
<dbReference type="Orphanet" id="37612">
    <property type="disease" value="Episodic ataxia type 1"/>
</dbReference>
<dbReference type="Orphanet" id="972">
    <property type="disease" value="Hereditary continuous muscle fiber activity"/>
</dbReference>
<dbReference type="Orphanet" id="199326">
    <property type="disease" value="Isolated autosomal dominant hypomagnesemia, Glaudemans type"/>
</dbReference>
<dbReference type="Orphanet" id="98809">
    <property type="disease" value="Paroxysmal kinesigenic dyskinesia"/>
</dbReference>
<dbReference type="PharmGKB" id="PA30019"/>
<dbReference type="VEuPathDB" id="HostDB:ENSG00000111262"/>
<dbReference type="eggNOG" id="KOG1545">
    <property type="taxonomic scope" value="Eukaryota"/>
</dbReference>
<dbReference type="GeneTree" id="ENSGT00940000158576"/>
<dbReference type="HOGENOM" id="CLU_011722_4_0_1"/>
<dbReference type="InParanoid" id="Q09470"/>
<dbReference type="OMA" id="PQEGSYP"/>
<dbReference type="OrthoDB" id="415460at2759"/>
<dbReference type="PAN-GO" id="Q09470">
    <property type="GO annotations" value="9 GO annotations based on evolutionary models"/>
</dbReference>
<dbReference type="PhylomeDB" id="Q09470"/>
<dbReference type="TreeFam" id="TF313103"/>
<dbReference type="PathwayCommons" id="Q09470"/>
<dbReference type="Reactome" id="R-HSA-1296072">
    <property type="pathway name" value="Voltage gated Potassium channels"/>
</dbReference>
<dbReference type="SignaLink" id="Q09470"/>
<dbReference type="SIGNOR" id="Q09470"/>
<dbReference type="BioGRID-ORCS" id="3736">
    <property type="hits" value="13 hits in 1160 CRISPR screens"/>
</dbReference>
<dbReference type="ChiTaRS" id="KCNA1">
    <property type="organism name" value="human"/>
</dbReference>
<dbReference type="GeneWiki" id="Kv1.1"/>
<dbReference type="GenomeRNAi" id="3736"/>
<dbReference type="Pharos" id="Q09470">
    <property type="development level" value="Tclin"/>
</dbReference>
<dbReference type="PRO" id="PR:Q09470"/>
<dbReference type="Proteomes" id="UP000005640">
    <property type="component" value="Chromosome 12"/>
</dbReference>
<dbReference type="RNAct" id="Q09470">
    <property type="molecule type" value="protein"/>
</dbReference>
<dbReference type="Bgee" id="ENSG00000111262">
    <property type="expression patterns" value="Expressed in endothelial cell and 114 other cell types or tissues"/>
</dbReference>
<dbReference type="ExpressionAtlas" id="Q09470">
    <property type="expression patterns" value="baseline and differential"/>
</dbReference>
<dbReference type="GO" id="GO:0070161">
    <property type="term" value="C:anchoring junction"/>
    <property type="evidence" value="ECO:0007669"/>
    <property type="project" value="UniProtKB-SubCell"/>
</dbReference>
<dbReference type="GO" id="GO:0043194">
    <property type="term" value="C:axon initial segment"/>
    <property type="evidence" value="ECO:0007669"/>
    <property type="project" value="Ensembl"/>
</dbReference>
<dbReference type="GO" id="GO:0043679">
    <property type="term" value="C:axon terminus"/>
    <property type="evidence" value="ECO:0000250"/>
    <property type="project" value="UniProtKB"/>
</dbReference>
<dbReference type="GO" id="GO:0030054">
    <property type="term" value="C:cell junction"/>
    <property type="evidence" value="ECO:0000250"/>
    <property type="project" value="UniProtKB"/>
</dbReference>
<dbReference type="GO" id="GO:0009986">
    <property type="term" value="C:cell surface"/>
    <property type="evidence" value="ECO:0007669"/>
    <property type="project" value="Ensembl"/>
</dbReference>
<dbReference type="GO" id="GO:0031410">
    <property type="term" value="C:cytoplasmic vesicle"/>
    <property type="evidence" value="ECO:0007669"/>
    <property type="project" value="UniProtKB-KW"/>
</dbReference>
<dbReference type="GO" id="GO:0005829">
    <property type="term" value="C:cytosol"/>
    <property type="evidence" value="ECO:0000250"/>
    <property type="project" value="UniProtKB"/>
</dbReference>
<dbReference type="GO" id="GO:0030425">
    <property type="term" value="C:dendrite"/>
    <property type="evidence" value="ECO:0000250"/>
    <property type="project" value="UniProtKB"/>
</dbReference>
<dbReference type="GO" id="GO:0005783">
    <property type="term" value="C:endoplasmic reticulum"/>
    <property type="evidence" value="ECO:0000250"/>
    <property type="project" value="UniProtKB"/>
</dbReference>
<dbReference type="GO" id="GO:0044224">
    <property type="term" value="C:juxtaparanode region of axon"/>
    <property type="evidence" value="ECO:0000314"/>
    <property type="project" value="UniProtKB"/>
</dbReference>
<dbReference type="GO" id="GO:0016020">
    <property type="term" value="C:membrane"/>
    <property type="evidence" value="ECO:0000318"/>
    <property type="project" value="GO_Central"/>
</dbReference>
<dbReference type="GO" id="GO:0043025">
    <property type="term" value="C:neuronal cell body"/>
    <property type="evidence" value="ECO:0000250"/>
    <property type="project" value="UniProtKB"/>
</dbReference>
<dbReference type="GO" id="GO:0033270">
    <property type="term" value="C:paranode region of axon"/>
    <property type="evidence" value="ECO:0000314"/>
    <property type="project" value="UniProtKB"/>
</dbReference>
<dbReference type="GO" id="GO:0043204">
    <property type="term" value="C:perikaryon"/>
    <property type="evidence" value="ECO:0000250"/>
    <property type="project" value="UniProtKB"/>
</dbReference>
<dbReference type="GO" id="GO:0005886">
    <property type="term" value="C:plasma membrane"/>
    <property type="evidence" value="ECO:0000314"/>
    <property type="project" value="UniProtKB"/>
</dbReference>
<dbReference type="GO" id="GO:0042734">
    <property type="term" value="C:presynaptic membrane"/>
    <property type="evidence" value="ECO:0000250"/>
    <property type="project" value="UniProtKB"/>
</dbReference>
<dbReference type="GO" id="GO:0045202">
    <property type="term" value="C:synapse"/>
    <property type="evidence" value="ECO:0000250"/>
    <property type="project" value="UniProtKB"/>
</dbReference>
<dbReference type="GO" id="GO:0008076">
    <property type="term" value="C:voltage-gated potassium channel complex"/>
    <property type="evidence" value="ECO:0000314"/>
    <property type="project" value="UniProtKB"/>
</dbReference>
<dbReference type="GO" id="GO:0005251">
    <property type="term" value="F:delayed rectifier potassium channel activity"/>
    <property type="evidence" value="ECO:0000314"/>
    <property type="project" value="UniProtKB"/>
</dbReference>
<dbReference type="GO" id="GO:0097718">
    <property type="term" value="F:disordered domain specific binding"/>
    <property type="evidence" value="ECO:0000353"/>
    <property type="project" value="CAFA"/>
</dbReference>
<dbReference type="GO" id="GO:0005249">
    <property type="term" value="F:voltage-gated potassium channel activity"/>
    <property type="evidence" value="ECO:0000314"/>
    <property type="project" value="UniProtKB"/>
</dbReference>
<dbReference type="GO" id="GO:0001508">
    <property type="term" value="P:action potential"/>
    <property type="evidence" value="ECO:0000318"/>
    <property type="project" value="GO_Central"/>
</dbReference>
<dbReference type="GO" id="GO:0010644">
    <property type="term" value="P:cell communication by electrical coupling"/>
    <property type="evidence" value="ECO:0000250"/>
    <property type="project" value="UniProtKB"/>
</dbReference>
<dbReference type="GO" id="GO:0071286">
    <property type="term" value="P:cellular response to magnesium ion"/>
    <property type="evidence" value="ECO:0000250"/>
    <property type="project" value="UniProtKB"/>
</dbReference>
<dbReference type="GO" id="GO:0050966">
    <property type="term" value="P:detection of mechanical stimulus involved in sensory perception of pain"/>
    <property type="evidence" value="ECO:0000250"/>
    <property type="project" value="UniProtKB"/>
</dbReference>
<dbReference type="GO" id="GO:0050976">
    <property type="term" value="P:detection of mechanical stimulus involved in sensory perception of touch"/>
    <property type="evidence" value="ECO:0000250"/>
    <property type="project" value="UniProtKB"/>
</dbReference>
<dbReference type="GO" id="GO:0021766">
    <property type="term" value="P:hippocampus development"/>
    <property type="evidence" value="ECO:0007669"/>
    <property type="project" value="Ensembl"/>
</dbReference>
<dbReference type="GO" id="GO:0010960">
    <property type="term" value="P:magnesium ion homeostasis"/>
    <property type="evidence" value="ECO:0000315"/>
    <property type="project" value="UniProtKB"/>
</dbReference>
<dbReference type="GO" id="GO:0086011">
    <property type="term" value="P:membrane repolarization during action potential"/>
    <property type="evidence" value="ECO:0000315"/>
    <property type="project" value="UniProtKB"/>
</dbReference>
<dbReference type="GO" id="GO:0007405">
    <property type="term" value="P:neuroblast proliferation"/>
    <property type="evidence" value="ECO:0007669"/>
    <property type="project" value="Ensembl"/>
</dbReference>
<dbReference type="GO" id="GO:0050905">
    <property type="term" value="P:neuromuscular process"/>
    <property type="evidence" value="ECO:0000315"/>
    <property type="project" value="UniProtKB"/>
</dbReference>
<dbReference type="GO" id="GO:0019228">
    <property type="term" value="P:neuronal action potential"/>
    <property type="evidence" value="ECO:0000250"/>
    <property type="project" value="UniProtKB"/>
</dbReference>
<dbReference type="GO" id="GO:0023041">
    <property type="term" value="P:neuronal signal transduction"/>
    <property type="evidence" value="ECO:0000250"/>
    <property type="project" value="UniProtKB"/>
</dbReference>
<dbReference type="GO" id="GO:0071805">
    <property type="term" value="P:potassium ion transmembrane transport"/>
    <property type="evidence" value="ECO:0000315"/>
    <property type="project" value="UniProtKB"/>
</dbReference>
<dbReference type="GO" id="GO:0051260">
    <property type="term" value="P:protein homooligomerization"/>
    <property type="evidence" value="ECO:0007669"/>
    <property type="project" value="InterPro"/>
</dbReference>
<dbReference type="GO" id="GO:0042391">
    <property type="term" value="P:regulation of membrane potential"/>
    <property type="evidence" value="ECO:0000315"/>
    <property type="project" value="UniProtKB"/>
</dbReference>
<dbReference type="GO" id="GO:0006937">
    <property type="term" value="P:regulation of muscle contraction"/>
    <property type="evidence" value="ECO:0000250"/>
    <property type="project" value="UniProtKB"/>
</dbReference>
<dbReference type="GO" id="GO:0001964">
    <property type="term" value="P:startle response"/>
    <property type="evidence" value="ECO:0007669"/>
    <property type="project" value="Ensembl"/>
</dbReference>
<dbReference type="FunFam" id="1.10.287.70:FF:000002">
    <property type="entry name" value="Potassium voltage-gated channel subfamily a member"/>
    <property type="match status" value="1"/>
</dbReference>
<dbReference type="FunFam" id="3.30.710.10:FF:000007">
    <property type="entry name" value="Potassium voltage-gated channel subfamily A member 2"/>
    <property type="match status" value="1"/>
</dbReference>
<dbReference type="FunFam" id="1.20.120.350:FF:000021">
    <property type="entry name" value="Potassium voltage-gated channel subfamily A member 3"/>
    <property type="match status" value="1"/>
</dbReference>
<dbReference type="Gene3D" id="1.10.287.70">
    <property type="match status" value="1"/>
</dbReference>
<dbReference type="Gene3D" id="3.30.710.10">
    <property type="entry name" value="Potassium Channel Kv1.1, Chain A"/>
    <property type="match status" value="1"/>
</dbReference>
<dbReference type="Gene3D" id="1.20.120.350">
    <property type="entry name" value="Voltage-gated potassium channels. Chain C"/>
    <property type="match status" value="1"/>
</dbReference>
<dbReference type="InterPro" id="IPR000210">
    <property type="entry name" value="BTB/POZ_dom"/>
</dbReference>
<dbReference type="InterPro" id="IPR005821">
    <property type="entry name" value="Ion_trans_dom"/>
</dbReference>
<dbReference type="InterPro" id="IPR003968">
    <property type="entry name" value="K_chnl_volt-dep_Kv"/>
</dbReference>
<dbReference type="InterPro" id="IPR003972">
    <property type="entry name" value="K_chnl_volt-dep_Kv1"/>
</dbReference>
<dbReference type="InterPro" id="IPR004048">
    <property type="entry name" value="K_chnl_volt-dep_Kv1.1"/>
</dbReference>
<dbReference type="InterPro" id="IPR011333">
    <property type="entry name" value="SKP1/BTB/POZ_sf"/>
</dbReference>
<dbReference type="InterPro" id="IPR003131">
    <property type="entry name" value="T1-type_BTB"/>
</dbReference>
<dbReference type="InterPro" id="IPR028325">
    <property type="entry name" value="VG_K_chnl"/>
</dbReference>
<dbReference type="InterPro" id="IPR027359">
    <property type="entry name" value="Volt_channel_dom_sf"/>
</dbReference>
<dbReference type="PANTHER" id="PTHR11537:SF24">
    <property type="entry name" value="POTASSIUM VOLTAGE-GATED CHANNEL SUBFAMILY A MEMBER 1"/>
    <property type="match status" value="1"/>
</dbReference>
<dbReference type="PANTHER" id="PTHR11537">
    <property type="entry name" value="VOLTAGE-GATED POTASSIUM CHANNEL"/>
    <property type="match status" value="1"/>
</dbReference>
<dbReference type="Pfam" id="PF02214">
    <property type="entry name" value="BTB_2"/>
    <property type="match status" value="1"/>
</dbReference>
<dbReference type="Pfam" id="PF00520">
    <property type="entry name" value="Ion_trans"/>
    <property type="match status" value="1"/>
</dbReference>
<dbReference type="PRINTS" id="PR00169">
    <property type="entry name" value="KCHANNEL"/>
</dbReference>
<dbReference type="PRINTS" id="PR01508">
    <property type="entry name" value="KV11CHANNEL"/>
</dbReference>
<dbReference type="PRINTS" id="PR01491">
    <property type="entry name" value="KVCHANNEL"/>
</dbReference>
<dbReference type="PRINTS" id="PR01496">
    <property type="entry name" value="SHAKERCHANEL"/>
</dbReference>
<dbReference type="SMART" id="SM00225">
    <property type="entry name" value="BTB"/>
    <property type="match status" value="1"/>
</dbReference>
<dbReference type="SUPFAM" id="SSF54695">
    <property type="entry name" value="POZ domain"/>
    <property type="match status" value="1"/>
</dbReference>
<dbReference type="SUPFAM" id="SSF81324">
    <property type="entry name" value="Voltage-gated potassium channels"/>
    <property type="match status" value="1"/>
</dbReference>
<name>KCNA1_HUMAN</name>
<organism>
    <name type="scientific">Homo sapiens</name>
    <name type="common">Human</name>
    <dbReference type="NCBI Taxonomy" id="9606"/>
    <lineage>
        <taxon>Eukaryota</taxon>
        <taxon>Metazoa</taxon>
        <taxon>Chordata</taxon>
        <taxon>Craniata</taxon>
        <taxon>Vertebrata</taxon>
        <taxon>Euteleostomi</taxon>
        <taxon>Mammalia</taxon>
        <taxon>Eutheria</taxon>
        <taxon>Euarchontoglires</taxon>
        <taxon>Primates</taxon>
        <taxon>Haplorrhini</taxon>
        <taxon>Catarrhini</taxon>
        <taxon>Hominidae</taxon>
        <taxon>Homo</taxon>
    </lineage>
</organism>
<proteinExistence type="evidence at protein level"/>
<reference key="1">
    <citation type="journal article" date="1990" name="Mol. Cell. Neurosci.">
        <title>Human potassium channel genes: molecular cloning and functional expression.</title>
        <authorList>
            <person name="Ramaswami M."/>
            <person name="Gautam M."/>
            <person name="Kamb A."/>
            <person name="Rudy B."/>
            <person name="Tanouye M.A."/>
            <person name="Mathew M.K."/>
        </authorList>
    </citation>
    <scope>NUCLEOTIDE SEQUENCE [MRNA]</scope>
    <scope>FUNCTION</scope>
    <scope>TRANSPORTER ACTIVITY</scope>
    <scope>SUBCELLULAR LOCATION</scope>
    <scope>ACTIVITY REGULATION</scope>
    <source>
        <tissue>Brain</tissue>
    </source>
</reference>
<reference key="2">
    <citation type="journal article" date="2006" name="Nature">
        <title>The finished DNA sequence of human chromosome 12.</title>
        <authorList>
            <person name="Scherer S.E."/>
            <person name="Muzny D.M."/>
            <person name="Buhay C.J."/>
            <person name="Chen R."/>
            <person name="Cree A."/>
            <person name="Ding Y."/>
            <person name="Dugan-Rocha S."/>
            <person name="Gill R."/>
            <person name="Gunaratne P."/>
            <person name="Harris R.A."/>
            <person name="Hawes A.C."/>
            <person name="Hernandez J."/>
            <person name="Hodgson A.V."/>
            <person name="Hume J."/>
            <person name="Jackson A."/>
            <person name="Khan Z.M."/>
            <person name="Kovar-Smith C."/>
            <person name="Lewis L.R."/>
            <person name="Lozado R.J."/>
            <person name="Metzker M.L."/>
            <person name="Milosavljevic A."/>
            <person name="Miner G.R."/>
            <person name="Montgomery K.T."/>
            <person name="Morgan M.B."/>
            <person name="Nazareth L.V."/>
            <person name="Scott G."/>
            <person name="Sodergren E."/>
            <person name="Song X.-Z."/>
            <person name="Steffen D."/>
            <person name="Lovering R.C."/>
            <person name="Wheeler D.A."/>
            <person name="Worley K.C."/>
            <person name="Yuan Y."/>
            <person name="Zhang Z."/>
            <person name="Adams C.Q."/>
            <person name="Ansari-Lari M.A."/>
            <person name="Ayele M."/>
            <person name="Brown M.J."/>
            <person name="Chen G."/>
            <person name="Chen Z."/>
            <person name="Clerc-Blankenburg K.P."/>
            <person name="Davis C."/>
            <person name="Delgado O."/>
            <person name="Dinh H.H."/>
            <person name="Draper H."/>
            <person name="Gonzalez-Garay M.L."/>
            <person name="Havlak P."/>
            <person name="Jackson L.R."/>
            <person name="Jacob L.S."/>
            <person name="Kelly S.H."/>
            <person name="Li L."/>
            <person name="Li Z."/>
            <person name="Liu J."/>
            <person name="Liu W."/>
            <person name="Lu J."/>
            <person name="Maheshwari M."/>
            <person name="Nguyen B.-V."/>
            <person name="Okwuonu G.O."/>
            <person name="Pasternak S."/>
            <person name="Perez L.M."/>
            <person name="Plopper F.J.H."/>
            <person name="Santibanez J."/>
            <person name="Shen H."/>
            <person name="Tabor P.E."/>
            <person name="Verduzco D."/>
            <person name="Waldron L."/>
            <person name="Wang Q."/>
            <person name="Williams G.A."/>
            <person name="Zhang J."/>
            <person name="Zhou J."/>
            <person name="Allen C.C."/>
            <person name="Amin A.G."/>
            <person name="Anyalebechi V."/>
            <person name="Bailey M."/>
            <person name="Barbaria J.A."/>
            <person name="Bimage K.E."/>
            <person name="Bryant N.P."/>
            <person name="Burch P.E."/>
            <person name="Burkett C.E."/>
            <person name="Burrell K.L."/>
            <person name="Calderon E."/>
            <person name="Cardenas V."/>
            <person name="Carter K."/>
            <person name="Casias K."/>
            <person name="Cavazos I."/>
            <person name="Cavazos S.R."/>
            <person name="Ceasar H."/>
            <person name="Chacko J."/>
            <person name="Chan S.N."/>
            <person name="Chavez D."/>
            <person name="Christopoulos C."/>
            <person name="Chu J."/>
            <person name="Cockrell R."/>
            <person name="Cox C.D."/>
            <person name="Dang M."/>
            <person name="Dathorne S.R."/>
            <person name="David R."/>
            <person name="Davis C.M."/>
            <person name="Davy-Carroll L."/>
            <person name="Deshazo D.R."/>
            <person name="Donlin J.E."/>
            <person name="D'Souza L."/>
            <person name="Eaves K.A."/>
            <person name="Egan A."/>
            <person name="Emery-Cohen A.J."/>
            <person name="Escotto M."/>
            <person name="Flagg N."/>
            <person name="Forbes L.D."/>
            <person name="Gabisi A.M."/>
            <person name="Garza M."/>
            <person name="Hamilton C."/>
            <person name="Henderson N."/>
            <person name="Hernandez O."/>
            <person name="Hines S."/>
            <person name="Hogues M.E."/>
            <person name="Huang M."/>
            <person name="Idlebird D.G."/>
            <person name="Johnson R."/>
            <person name="Jolivet A."/>
            <person name="Jones S."/>
            <person name="Kagan R."/>
            <person name="King L.M."/>
            <person name="Leal B."/>
            <person name="Lebow H."/>
            <person name="Lee S."/>
            <person name="LeVan J.M."/>
            <person name="Lewis L.C."/>
            <person name="London P."/>
            <person name="Lorensuhewa L.M."/>
            <person name="Loulseged H."/>
            <person name="Lovett D.A."/>
            <person name="Lucier A."/>
            <person name="Lucier R.L."/>
            <person name="Ma J."/>
            <person name="Madu R.C."/>
            <person name="Mapua P."/>
            <person name="Martindale A.D."/>
            <person name="Martinez E."/>
            <person name="Massey E."/>
            <person name="Mawhiney S."/>
            <person name="Meador M.G."/>
            <person name="Mendez S."/>
            <person name="Mercado C."/>
            <person name="Mercado I.C."/>
            <person name="Merritt C.E."/>
            <person name="Miner Z.L."/>
            <person name="Minja E."/>
            <person name="Mitchell T."/>
            <person name="Mohabbat F."/>
            <person name="Mohabbat K."/>
            <person name="Montgomery B."/>
            <person name="Moore N."/>
            <person name="Morris S."/>
            <person name="Munidasa M."/>
            <person name="Ngo R.N."/>
            <person name="Nguyen N.B."/>
            <person name="Nickerson E."/>
            <person name="Nwaokelemeh O.O."/>
            <person name="Nwokenkwo S."/>
            <person name="Obregon M."/>
            <person name="Oguh M."/>
            <person name="Oragunye N."/>
            <person name="Oviedo R.J."/>
            <person name="Parish B.J."/>
            <person name="Parker D.N."/>
            <person name="Parrish J."/>
            <person name="Parks K.L."/>
            <person name="Paul H.A."/>
            <person name="Payton B.A."/>
            <person name="Perez A."/>
            <person name="Perrin W."/>
            <person name="Pickens A."/>
            <person name="Primus E.L."/>
            <person name="Pu L.-L."/>
            <person name="Puazo M."/>
            <person name="Quiles M.M."/>
            <person name="Quiroz J.B."/>
            <person name="Rabata D."/>
            <person name="Reeves K."/>
            <person name="Ruiz S.J."/>
            <person name="Shao H."/>
            <person name="Sisson I."/>
            <person name="Sonaike T."/>
            <person name="Sorelle R.P."/>
            <person name="Sutton A.E."/>
            <person name="Svatek A.F."/>
            <person name="Svetz L.A."/>
            <person name="Tamerisa K.S."/>
            <person name="Taylor T.R."/>
            <person name="Teague B."/>
            <person name="Thomas N."/>
            <person name="Thorn R.D."/>
            <person name="Trejos Z.Y."/>
            <person name="Trevino B.K."/>
            <person name="Ukegbu O.N."/>
            <person name="Urban J.B."/>
            <person name="Vasquez L.I."/>
            <person name="Vera V.A."/>
            <person name="Villasana D.M."/>
            <person name="Wang L."/>
            <person name="Ward-Moore S."/>
            <person name="Warren J.T."/>
            <person name="Wei X."/>
            <person name="White F."/>
            <person name="Williamson A.L."/>
            <person name="Wleczyk R."/>
            <person name="Wooden H.S."/>
            <person name="Wooden S.H."/>
            <person name="Yen J."/>
            <person name="Yoon L."/>
            <person name="Yoon V."/>
            <person name="Zorrilla S.E."/>
            <person name="Nelson D."/>
            <person name="Kucherlapati R."/>
            <person name="Weinstock G."/>
            <person name="Gibbs R.A."/>
        </authorList>
    </citation>
    <scope>NUCLEOTIDE SEQUENCE [LARGE SCALE GENOMIC DNA]</scope>
</reference>
<reference key="3">
    <citation type="submission" date="2005-09" db="EMBL/GenBank/DDBJ databases">
        <authorList>
            <person name="Mural R.J."/>
            <person name="Istrail S."/>
            <person name="Sutton G.G."/>
            <person name="Florea L."/>
            <person name="Halpern A.L."/>
            <person name="Mobarry C.M."/>
            <person name="Lippert R."/>
            <person name="Walenz B."/>
            <person name="Shatkay H."/>
            <person name="Dew I."/>
            <person name="Miller J.R."/>
            <person name="Flanigan M.J."/>
            <person name="Edwards N.J."/>
            <person name="Bolanos R."/>
            <person name="Fasulo D."/>
            <person name="Halldorsson B.V."/>
            <person name="Hannenhalli S."/>
            <person name="Turner R."/>
            <person name="Yooseph S."/>
            <person name="Lu F."/>
            <person name="Nusskern D.R."/>
            <person name="Shue B.C."/>
            <person name="Zheng X.H."/>
            <person name="Zhong F."/>
            <person name="Delcher A.L."/>
            <person name="Huson D.H."/>
            <person name="Kravitz S.A."/>
            <person name="Mouchard L."/>
            <person name="Reinert K."/>
            <person name="Remington K.A."/>
            <person name="Clark A.G."/>
            <person name="Waterman M.S."/>
            <person name="Eichler E.E."/>
            <person name="Adams M.D."/>
            <person name="Hunkapiller M.W."/>
            <person name="Myers E.W."/>
            <person name="Venter J.C."/>
        </authorList>
    </citation>
    <scope>NUCLEOTIDE SEQUENCE [LARGE SCALE GENOMIC DNA]</scope>
</reference>
<reference key="4">
    <citation type="journal article" date="2004" name="Genome Res.">
        <title>The status, quality, and expansion of the NIH full-length cDNA project: the Mammalian Gene Collection (MGC).</title>
        <authorList>
            <consortium name="The MGC Project Team"/>
        </authorList>
    </citation>
    <scope>NUCLEOTIDE SEQUENCE [LARGE SCALE MRNA]</scope>
    <source>
        <tissue>Brain cortex</tissue>
    </source>
</reference>
<reference key="5">
    <citation type="journal article" date="1990" name="Biochem. Soc. Trans.">
        <title>Cloning and characterization of a cDNA encoding a human brain potassium channel.</title>
        <authorList>
            <person name="Freeman S.N."/>
            <person name="Conley E.C."/>
            <person name="Brennand J.C."/>
            <person name="Russell N.J.W."/>
            <person name="Brammar W.J."/>
        </authorList>
    </citation>
    <scope>NUCLEOTIDE SEQUENCE [MRNA] OF 263-315</scope>
</reference>
<reference key="6">
    <citation type="journal article" date="2001" name="J. Comp. Neurol.">
        <title>Subunit composition and novel localization of K+ channels in spinal cord.</title>
        <authorList>
            <person name="Rasband M.N."/>
            <person name="Trimmer J.S."/>
        </authorList>
    </citation>
    <scope>INTERACTION WITH KCNA2 AND KCNAB2</scope>
    <scope>SUBUNIT</scope>
    <scope>SUBCELLULAR LOCATION</scope>
    <scope>TISSUE SPECIFICITY</scope>
</reference>
<reference key="7">
    <citation type="journal article" date="2003" name="Science">
        <title>Nervous system targets of RNA editing identified by comparative genomics.</title>
        <authorList>
            <person name="Hoopengardner B."/>
            <person name="Bhalla T."/>
            <person name="Staber C."/>
            <person name="Reenan R."/>
        </authorList>
    </citation>
    <scope>RNA EDITING OF POSITION 400</scope>
</reference>
<reference key="8">
    <citation type="journal article" date="2005" name="Proc. Natl. Acad. Sci. U.S.A.">
        <title>The human Kv1.1 channel is palmitoylated, modulating voltage sensing: Identification of a palmitoylation consensus sequence.</title>
        <authorList>
            <person name="Gubitosi-Klug R.A."/>
            <person name="Mancuso D.J."/>
            <person name="Gross R.W."/>
        </authorList>
    </citation>
    <scope>PALMITOYLATION AT CYS-243</scope>
    <scope>MUTAGENESIS OF 35-CYS--CYS-36 AND CYS-243</scope>
    <scope>FUNCTION</scope>
    <scope>SUBCELLULAR LOCATION</scope>
</reference>
<reference key="9">
    <citation type="journal article" date="2007" name="Mol. Neurobiol.">
        <title>Ionic channel function in action potential generation: current perspective.</title>
        <authorList>
            <person name="Baranauskas G."/>
        </authorList>
    </citation>
    <scope>REVIEW</scope>
</reference>
<reference key="10">
    <citation type="journal article" date="2010" name="Biochem. Biophys. Res. Commun.">
        <title>Potassium channel regulator KCNRG regulates surface expression of Shaker-type potassium channels.</title>
        <authorList>
            <person name="Usman H."/>
            <person name="Mathew M.K."/>
        </authorList>
    </citation>
    <scope>INTERACTION WITH KCNRG</scope>
    <scope>FUNCTION</scope>
    <scope>SUBCELLULAR LOCATION</scope>
</reference>
<reference key="11">
    <citation type="journal article" date="2010" name="Brain">
        <title>Nerve excitability studies characterize Kv1.1 fast potassium channel dysfunction in patients with episodic ataxia type 1.</title>
        <authorList>
            <person name="Tomlinson S.E."/>
            <person name="Tan S.V."/>
            <person name="Kullmann D.M."/>
            <person name="Griggs R.C."/>
            <person name="Burke D."/>
            <person name="Hanna M.G."/>
            <person name="Bostock H."/>
        </authorList>
    </citation>
    <scope>FUNCTION</scope>
</reference>
<reference key="12">
    <citation type="journal article" date="2011" name="PLoS ONE">
        <title>Evidence for presence and functional effects of Kv1.1 channels in beta-cells: general survey and results from mceph/mceph mice.</title>
        <authorList>
            <person name="Ma Z."/>
            <person name="Lavebratt C."/>
            <person name="Almgren M."/>
            <person name="Portwood N."/>
            <person name="Forsberg L.E."/>
            <person name="Branstrom R."/>
            <person name="Berglund E."/>
            <person name="Falkmer S."/>
            <person name="Sundler F."/>
            <person name="Wierup N."/>
            <person name="Bjorklund A."/>
        </authorList>
    </citation>
    <scope>TISSUE SPECIFICITY</scope>
</reference>
<reference key="13">
    <citation type="journal article" date="2013" name="Cancer Res.">
        <title>Potassium channel KCNA1 modulates oncogene-induced senescence and transformation.</title>
        <authorList>
            <person name="Lallet-Daher H."/>
            <person name="Wiel C."/>
            <person name="Gitenay D."/>
            <person name="Navaratnam N."/>
            <person name="Augert A."/>
            <person name="Le Calve B."/>
            <person name="Verbeke S."/>
            <person name="Carling D."/>
            <person name="Aubert S."/>
            <person name="Vindrieux D."/>
            <person name="Bernard D."/>
        </authorList>
    </citation>
    <scope>SUBCELLULAR LOCATION</scope>
    <scope>PHOSPHORYLATION AT SER-446</scope>
    <scope>MUTAGENESIS OF SER-446</scope>
</reference>
<reference key="14">
    <citation type="journal article" date="2014" name="Kidney Int.">
        <title>Ankyrin-3 is a novel binding partner of the voltage-gated potassium channel Kv1.1 implicated in renal magnesium handling.</title>
        <authorList>
            <person name="San-Cristobal P."/>
            <person name="Lainez S."/>
            <person name="Dimke H."/>
            <person name="de Graaf M.J."/>
            <person name="Hoenderop J.G."/>
            <person name="Bindels R.J."/>
        </authorList>
    </citation>
    <scope>INTERACTION WITH ANK3</scope>
    <scope>FUNCTION</scope>
    <scope>SUBCELLULAR LOCATION</scope>
</reference>
<reference key="15">
    <citation type="journal article" date="1994" name="Nat. Genet.">
        <title>Episodic ataxia/myokymia syndrome is associated with point mutations in the human potassium channel gene, KCNA1.</title>
        <authorList>
            <person name="Browne D.L."/>
            <person name="Gancher S.T."/>
            <person name="Nutt J.G."/>
            <person name="Brunt E.R.P."/>
            <person name="Smith E.A."/>
            <person name="Kramer P."/>
            <person name="Litt M."/>
        </authorList>
    </citation>
    <scope>VARIANTS EA1 PHE-174; SER-239; ILE-249 AND ALA-408</scope>
</reference>
<reference key="16">
    <citation type="journal article" date="1995" name="Hum. Mol. Genet.">
        <title>Identification of two new KCNA1 mutations in episodic ataxia/myokymia families.</title>
        <authorList>
            <person name="Browne D.L."/>
            <person name="Brunt E.R.P."/>
            <person name="Griggs R.C."/>
            <person name="Nutt J.G."/>
            <person name="Gancher S.T."/>
            <person name="Smith E.A."/>
            <person name="Litt M."/>
        </authorList>
    </citation>
    <scope>VARIANTS EA1 PHE-174; CYS-184 AND ASP-325</scope>
</reference>
<reference key="17">
    <citation type="journal article" date="1995" name="Neuron">
        <title>Episodic ataxia results from voltage-dependent potassium channels with altered functions.</title>
        <authorList>
            <person name="Adelman J.P."/>
            <person name="Bond C.T."/>
            <person name="Pessia M."/>
            <person name="Maylie J."/>
        </authorList>
    </citation>
    <scope>CHARACTERIZATION OF VARIANTS EA1 CYS-184; ASP-325 AND ALA-408</scope>
    <scope>FUNCTION</scope>
    <scope>TRANSPORTER ACTIVITY</scope>
</reference>
<reference key="18">
    <citation type="journal article" date="1996" name="Ann. Neurol.">
        <title>Episodic ataxia and myokymia syndrome: a new mutation of potassium channel gene Kv1.1.</title>
        <authorList>
            <person name="Comu S."/>
            <person name="Giuliani M."/>
            <person name="Narayanan V."/>
        </authorList>
    </citation>
    <scope>VARIANT EA1 MET-226</scope>
</reference>
<reference key="19">
    <citation type="journal article" date="1998" name="Hum. Genet.">
        <title>Three novel KCNA1 mutations in episodic ataxia type I families.</title>
        <authorList>
            <person name="Scheffer H."/>
            <person name="Brunt E.R.P."/>
            <person name="Mol G.J.J."/>
            <person name="van der Vlies P."/>
            <person name="Stulp R.P."/>
            <person name="Verlind E."/>
            <person name="Mantel G."/>
            <person name="Averyanov Y.N."/>
            <person name="Hofstra R.M.W."/>
            <person name="Buys C.H.C.M."/>
        </authorList>
    </citation>
    <scope>VARIANTS EA1 ARG-177; ALA-226 AND ILE-404</scope>
</reference>
<reference key="20">
    <citation type="journal article" date="1999" name="Brain">
        <title>A novel mutation in the human voltage-gated potassium channel gene (Kv1.1) associates with episodic ataxia type 1 and sometimes with partial epilepsy.</title>
        <authorList>
            <person name="Zuberi S.M."/>
            <person name="Eunson L.H."/>
            <person name="Spauschus A."/>
            <person name="De Silva R."/>
            <person name="Tolmie J."/>
            <person name="Wood N.W."/>
            <person name="McWilliam R.C."/>
            <person name="Stephenson J.P.B."/>
            <person name="Kullmann D.M."/>
            <person name="Hanna M.G."/>
        </authorList>
    </citation>
    <scope>VARIANT EA1 ARG-226</scope>
    <scope>CHARACTERIZATION OF VARIANT EA1 ARG-226</scope>
</reference>
<reference key="21">
    <citation type="journal article" date="2000" name="Ann. Neurol.">
        <title>Clinical, genetic, and expression studies of mutations in the potassium channel gene KCNA1 reveal new phenotypic variability.</title>
        <authorList>
            <person name="Eunson L.H."/>
            <person name="Rea R."/>
            <person name="Zuberi S.M."/>
            <person name="Youroukos S."/>
            <person name="Panayiotopoulos C.P."/>
            <person name="Liguori R."/>
            <person name="Avoni P."/>
            <person name="McWilliam R.C."/>
            <person name="Stephenson J.B.P."/>
            <person name="Hanna M.G."/>
            <person name="Kullmann D.M."/>
            <person name="Spauschus A."/>
        </authorList>
    </citation>
    <scope>VARIANTS MK1 PRO-242 AND HIS-244</scope>
    <scope>VARIANT EA1 ILE-404</scope>
    <scope>CHARACTERIZATION OF VARIANTS MK1 PRO-242 AND HIS-244</scope>
    <scope>CHARACTERIZATION OF VARIANT EA1 ILE-404</scope>
    <scope>FUNCTION</scope>
</reference>
<reference key="22">
    <citation type="journal article" date="2000" name="Hum. Mutat.">
        <title>Identification of a novel missense mutation L329I in the episodic ataxia type 1 gene KCNA1 -- a challenging problem.</title>
        <authorList>
            <person name="Knight M.A."/>
            <person name="Storey E."/>
            <person name="McKinlay Gardner R.J."/>
            <person name="Hand P."/>
            <person name="Forrest S.M."/>
        </authorList>
    </citation>
    <scope>VARIANT EA1 ILE-329</scope>
</reference>
<reference key="23">
    <citation type="journal article" date="2002" name="J. Neurosci.">
        <title>Episodic ataxia type 1 mutations in the human Kv1.1 potassium channel alter hKvbeta 1-induced N-type inactivation.</title>
        <authorList>
            <person name="Maylie B."/>
            <person name="Bissonnette E."/>
            <person name="Virk M."/>
            <person name="Adelman J.P."/>
            <person name="Maylie J.G."/>
        </authorList>
    </citation>
    <scope>CHARACTERIZATION OF VARIANTS EA1 ASP-325 AND ALA-408</scope>
    <scope>FUNCTION</scope>
    <scope>SUBCELLULAR LOCATION</scope>
    <scope>SUBUNIT</scope>
    <scope>INTERACTION WITH KCNAB1</scope>
</reference>
<reference key="24">
    <citation type="journal article" date="2004" name="Hum. Mutat.">
        <title>A novel mutation in KCNA1 causes episodic ataxia without myokymia.</title>
        <authorList>
            <person name="Lee H."/>
            <person name="Wang H."/>
            <person name="Jen J.C."/>
            <person name="Sabatti C."/>
            <person name="Baloh R.W."/>
            <person name="Nelson S.F."/>
        </authorList>
    </citation>
    <scope>VARIANT EA1 ILE-342</scope>
</reference>
<reference key="25">
    <citation type="journal article" date="2006" name="Eur. J. Neurosci.">
        <title>Episodic ataxia type 1 mutations in the KCNA1 gene impair the fast inactivation properties of the human potassium channels Kv1.4-1.1/Kvbeta1.1 and Kv1.4-1.1/Kvbeta1.2.</title>
        <authorList>
            <person name="Imbrici P."/>
            <person name="D'Adamo M.C."/>
            <person name="Kullmann D.M."/>
            <person name="Pessia M."/>
        </authorList>
    </citation>
    <scope>CHARACTERIZATION OF VARIANTS EA1 ASP-325; ILE-404 AND ALA-408</scope>
    <scope>MUTAGENESIS OF ILE-177</scope>
    <scope>FUNCTION</scope>
    <scope>SUBCELLULAR LOCATION</scope>
</reference>
<reference key="26">
    <citation type="journal article" date="2007" name="Neurogenetics">
        <title>Functional analysis of a novel potassium channel (KCNA1) mutation in hereditary myokymia.</title>
        <authorList>
            <person name="Chen H."/>
            <person name="von Hehn C."/>
            <person name="Kaczmarek L.K."/>
            <person name="Ment L.R."/>
            <person name="Pober B.R."/>
            <person name="Hisama F.M."/>
        </authorList>
    </citation>
    <scope>VARIANT MK1 LYS-226</scope>
    <scope>CHARACTERIZATION OF VARIANT MK1 LYS-226</scope>
    <scope>FUNCTION</scope>
    <scope>SUBCELLULAR LOCATION</scope>
</reference>
<reference key="27">
    <citation type="journal article" date="2009" name="J. Clin. Invest.">
        <title>A missense mutation in the Kv1.1 voltage-gated potassium channel-encoding gene KCNA1 is linked to human autosomal dominant hypomagnesemia.</title>
        <authorList>
            <person name="Glaudemans B."/>
            <person name="van der Wijst J."/>
            <person name="Scola R.H."/>
            <person name="Lorenzoni P.J."/>
            <person name="Heister A."/>
            <person name="van der Kemp A.W."/>
            <person name="Knoers N.V."/>
            <person name="Hoenderop J.G."/>
            <person name="Bindels R.J."/>
        </authorList>
    </citation>
    <scope>VARIANT MK1 ASP-255</scope>
    <scope>CHARACTERIZATION OF VARIANT MK1 ASP-255</scope>
    <scope>FUNCTION</scope>
    <scope>TRANSPORTER ACTIVITY</scope>
    <scope>SUBCELLULAR LOCATION</scope>
    <scope>ACTIVITY REGULATION</scope>
</reference>
<reference key="28">
    <citation type="journal article" date="2010" name="J. Biol. Chem.">
        <title>Functional analysis of the Kv1.1 N255D mutation associated with autosomal dominant hypomagnesemia.</title>
        <authorList>
            <person name="van der Wijst J."/>
            <person name="Glaudemans B."/>
            <person name="Venselaar H."/>
            <person name="Nair A.V."/>
            <person name="Forst A.L."/>
            <person name="Hoenderop J.G."/>
            <person name="Bindels R.J."/>
        </authorList>
    </citation>
    <scope>CHARACTERIZATION OF VARIANT MK1 ASP-255</scope>
    <scope>MUTAGENESIS OF ASN-255</scope>
    <scope>FUNCTION</scope>
    <scope>TRANSPORTER ACTIVITY</scope>
    <scope>SUBCELLULAR LOCATION</scope>
</reference>
<reference key="29">
    <citation type="journal article" date="2017" name="Hum. Mutat.">
        <title>Diagnostic targeted resequencing in 349 patients with drug-resistant pediatric epilepsies identifies causative mutations in 30 different genes.</title>
        <authorList>
            <consortium name="Clinical Study Group"/>
            <person name="Parrini E."/>
            <person name="Marini C."/>
            <person name="Mei D."/>
            <person name="Galuppi A."/>
            <person name="Cellini E."/>
            <person name="Pucatti D."/>
            <person name="Chiti L."/>
            <person name="Rutigliano D."/>
            <person name="Bianchini C."/>
            <person name="Virdo S."/>
            <person name="De Vita D."/>
            <person name="Bigoni S."/>
            <person name="Barba C."/>
            <person name="Mari F."/>
            <person name="Montomoli M."/>
            <person name="Pisano T."/>
            <person name="Rosati A."/>
            <person name="Guerrini R."/>
        </authorList>
    </citation>
    <scope>VARIANT LEU-405</scope>
</reference>
<accession>Q09470</accession>
<accession>A6NM83</accession>
<accession>Q3MIQ9</accession>